<reference key="1">
    <citation type="journal article" date="2005" name="Nucleic Acids Res.">
        <title>Genome dynamics and diversity of Shigella species, the etiologic agents of bacillary dysentery.</title>
        <authorList>
            <person name="Yang F."/>
            <person name="Yang J."/>
            <person name="Zhang X."/>
            <person name="Chen L."/>
            <person name="Jiang Y."/>
            <person name="Yan Y."/>
            <person name="Tang X."/>
            <person name="Wang J."/>
            <person name="Xiong Z."/>
            <person name="Dong J."/>
            <person name="Xue Y."/>
            <person name="Zhu Y."/>
            <person name="Xu X."/>
            <person name="Sun L."/>
            <person name="Chen S."/>
            <person name="Nie H."/>
            <person name="Peng J."/>
            <person name="Xu J."/>
            <person name="Wang Y."/>
            <person name="Yuan Z."/>
            <person name="Wen Y."/>
            <person name="Yao Z."/>
            <person name="Shen Y."/>
            <person name="Qiang B."/>
            <person name="Hou Y."/>
            <person name="Yu J."/>
            <person name="Jin Q."/>
        </authorList>
    </citation>
    <scope>NUCLEOTIDE SEQUENCE [LARGE SCALE GENOMIC DNA]</scope>
    <source>
        <strain>Sd197</strain>
    </source>
</reference>
<protein>
    <recommendedName>
        <fullName evidence="1">3-dehydroquinate synthase</fullName>
        <shortName evidence="1">DHQS</shortName>
        <ecNumber evidence="1">4.2.3.4</ecNumber>
    </recommendedName>
</protein>
<accession>Q32AK1</accession>
<keyword id="KW-0028">Amino-acid biosynthesis</keyword>
<keyword id="KW-0057">Aromatic amino acid biosynthesis</keyword>
<keyword id="KW-0170">Cobalt</keyword>
<keyword id="KW-0963">Cytoplasm</keyword>
<keyword id="KW-0456">Lyase</keyword>
<keyword id="KW-0479">Metal-binding</keyword>
<keyword id="KW-0520">NAD</keyword>
<keyword id="KW-0547">Nucleotide-binding</keyword>
<keyword id="KW-1185">Reference proteome</keyword>
<keyword id="KW-0862">Zinc</keyword>
<dbReference type="EC" id="4.2.3.4" evidence="1"/>
<dbReference type="EMBL" id="CP000034">
    <property type="protein sequence ID" value="ABB63654.1"/>
    <property type="molecule type" value="Genomic_DNA"/>
</dbReference>
<dbReference type="RefSeq" id="WP_000439843.1">
    <property type="nucleotide sequence ID" value="NC_007606.1"/>
</dbReference>
<dbReference type="RefSeq" id="YP_405145.1">
    <property type="nucleotide sequence ID" value="NC_007606.1"/>
</dbReference>
<dbReference type="SMR" id="Q32AK1"/>
<dbReference type="STRING" id="300267.SDY_3690"/>
<dbReference type="EnsemblBacteria" id="ABB63654">
    <property type="protein sequence ID" value="ABB63654"/>
    <property type="gene ID" value="SDY_3690"/>
</dbReference>
<dbReference type="KEGG" id="sdy:SDY_3690"/>
<dbReference type="PATRIC" id="fig|300267.13.peg.4378"/>
<dbReference type="HOGENOM" id="CLU_001201_0_2_6"/>
<dbReference type="UniPathway" id="UPA00053">
    <property type="reaction ID" value="UER00085"/>
</dbReference>
<dbReference type="Proteomes" id="UP000002716">
    <property type="component" value="Chromosome"/>
</dbReference>
<dbReference type="GO" id="GO:0005737">
    <property type="term" value="C:cytoplasm"/>
    <property type="evidence" value="ECO:0007669"/>
    <property type="project" value="UniProtKB-SubCell"/>
</dbReference>
<dbReference type="GO" id="GO:0003856">
    <property type="term" value="F:3-dehydroquinate synthase activity"/>
    <property type="evidence" value="ECO:0007669"/>
    <property type="project" value="UniProtKB-UniRule"/>
</dbReference>
<dbReference type="GO" id="GO:0046872">
    <property type="term" value="F:metal ion binding"/>
    <property type="evidence" value="ECO:0007669"/>
    <property type="project" value="UniProtKB-KW"/>
</dbReference>
<dbReference type="GO" id="GO:0000166">
    <property type="term" value="F:nucleotide binding"/>
    <property type="evidence" value="ECO:0007669"/>
    <property type="project" value="UniProtKB-KW"/>
</dbReference>
<dbReference type="GO" id="GO:0008652">
    <property type="term" value="P:amino acid biosynthetic process"/>
    <property type="evidence" value="ECO:0007669"/>
    <property type="project" value="UniProtKB-KW"/>
</dbReference>
<dbReference type="GO" id="GO:0009073">
    <property type="term" value="P:aromatic amino acid family biosynthetic process"/>
    <property type="evidence" value="ECO:0007669"/>
    <property type="project" value="UniProtKB-KW"/>
</dbReference>
<dbReference type="GO" id="GO:0009423">
    <property type="term" value="P:chorismate biosynthetic process"/>
    <property type="evidence" value="ECO:0007669"/>
    <property type="project" value="UniProtKB-UniRule"/>
</dbReference>
<dbReference type="CDD" id="cd08195">
    <property type="entry name" value="DHQS"/>
    <property type="match status" value="1"/>
</dbReference>
<dbReference type="FunFam" id="1.20.1090.10:FF:000002">
    <property type="entry name" value="3-dehydroquinate synthase"/>
    <property type="match status" value="1"/>
</dbReference>
<dbReference type="FunFam" id="3.40.50.1970:FF:000001">
    <property type="entry name" value="3-dehydroquinate synthase"/>
    <property type="match status" value="1"/>
</dbReference>
<dbReference type="Gene3D" id="3.40.50.1970">
    <property type="match status" value="1"/>
</dbReference>
<dbReference type="Gene3D" id="1.20.1090.10">
    <property type="entry name" value="Dehydroquinate synthase-like - alpha domain"/>
    <property type="match status" value="1"/>
</dbReference>
<dbReference type="HAMAP" id="MF_00110">
    <property type="entry name" value="DHQ_synthase"/>
    <property type="match status" value="1"/>
</dbReference>
<dbReference type="InterPro" id="IPR050071">
    <property type="entry name" value="Dehydroquinate_synthase"/>
</dbReference>
<dbReference type="InterPro" id="IPR016037">
    <property type="entry name" value="DHQ_synth_AroB"/>
</dbReference>
<dbReference type="InterPro" id="IPR030963">
    <property type="entry name" value="DHQ_synth_fam"/>
</dbReference>
<dbReference type="InterPro" id="IPR030960">
    <property type="entry name" value="DHQS/DOIS_N"/>
</dbReference>
<dbReference type="InterPro" id="IPR056179">
    <property type="entry name" value="DHQS_C"/>
</dbReference>
<dbReference type="NCBIfam" id="TIGR01357">
    <property type="entry name" value="aroB"/>
    <property type="match status" value="1"/>
</dbReference>
<dbReference type="PANTHER" id="PTHR43622">
    <property type="entry name" value="3-DEHYDROQUINATE SYNTHASE"/>
    <property type="match status" value="1"/>
</dbReference>
<dbReference type="PANTHER" id="PTHR43622:SF7">
    <property type="entry name" value="3-DEHYDROQUINATE SYNTHASE, CHLOROPLASTIC"/>
    <property type="match status" value="1"/>
</dbReference>
<dbReference type="Pfam" id="PF01761">
    <property type="entry name" value="DHQ_synthase"/>
    <property type="match status" value="1"/>
</dbReference>
<dbReference type="Pfam" id="PF24621">
    <property type="entry name" value="DHQS_C"/>
    <property type="match status" value="1"/>
</dbReference>
<dbReference type="PIRSF" id="PIRSF001455">
    <property type="entry name" value="DHQ_synth"/>
    <property type="match status" value="1"/>
</dbReference>
<dbReference type="SUPFAM" id="SSF56796">
    <property type="entry name" value="Dehydroquinate synthase-like"/>
    <property type="match status" value="1"/>
</dbReference>
<organism>
    <name type="scientific">Shigella dysenteriae serotype 1 (strain Sd197)</name>
    <dbReference type="NCBI Taxonomy" id="300267"/>
    <lineage>
        <taxon>Bacteria</taxon>
        <taxon>Pseudomonadati</taxon>
        <taxon>Pseudomonadota</taxon>
        <taxon>Gammaproteobacteria</taxon>
        <taxon>Enterobacterales</taxon>
        <taxon>Enterobacteriaceae</taxon>
        <taxon>Shigella</taxon>
    </lineage>
</organism>
<proteinExistence type="inferred from homology"/>
<comment type="function">
    <text evidence="1">Catalyzes the conversion of 3-deoxy-D-arabino-heptulosonate 7-phosphate (DAHP) to dehydroquinate (DHQ).</text>
</comment>
<comment type="catalytic activity">
    <reaction evidence="1">
        <text>7-phospho-2-dehydro-3-deoxy-D-arabino-heptonate = 3-dehydroquinate + phosphate</text>
        <dbReference type="Rhea" id="RHEA:21968"/>
        <dbReference type="ChEBI" id="CHEBI:32364"/>
        <dbReference type="ChEBI" id="CHEBI:43474"/>
        <dbReference type="ChEBI" id="CHEBI:58394"/>
        <dbReference type="EC" id="4.2.3.4"/>
    </reaction>
</comment>
<comment type="cofactor">
    <cofactor evidence="1">
        <name>Co(2+)</name>
        <dbReference type="ChEBI" id="CHEBI:48828"/>
    </cofactor>
    <cofactor evidence="1">
        <name>Zn(2+)</name>
        <dbReference type="ChEBI" id="CHEBI:29105"/>
    </cofactor>
    <text evidence="1">Binds 1 divalent metal cation per subunit. Can use either Co(2+) or Zn(2+).</text>
</comment>
<comment type="cofactor">
    <cofactor evidence="1">
        <name>NAD(+)</name>
        <dbReference type="ChEBI" id="CHEBI:57540"/>
    </cofactor>
</comment>
<comment type="pathway">
    <text evidence="1">Metabolic intermediate biosynthesis; chorismate biosynthesis; chorismate from D-erythrose 4-phosphate and phosphoenolpyruvate: step 2/7.</text>
</comment>
<comment type="subcellular location">
    <subcellularLocation>
        <location evidence="1">Cytoplasm</location>
    </subcellularLocation>
</comment>
<comment type="similarity">
    <text evidence="1">Belongs to the sugar phosphate cyclases superfamily. Dehydroquinate synthase family.</text>
</comment>
<evidence type="ECO:0000255" key="1">
    <source>
        <dbReference type="HAMAP-Rule" id="MF_00110"/>
    </source>
</evidence>
<sequence length="362" mass="38904">MERIVVTLGERSYPITIASGLFNEPASFLPLKSGEQVMLVTNETLAPLYLDKVRGVLEQAGVNVDSVILPDGEQYKSLAVLDTVFTALLQKPHGRDTTLVALGGGVVGDLTGFAAASYQRGVRFIQVPTTLLSQVDSSVGGKTAVNHPLGKNMIGAFYQPASVVVDLDCLKTLPPRELASGLAEVIKYGIILDGAFFNWLEEHLDALLRLDGPAMAYCIRRCCELKAEVVAADERETGLRALLNLGHTFGHAIEAEMGYGNWLHGEAVAAGMVMAARTSERLGQFSSAETQRIITLLKRAGLPVNGPREMSAQAYLPHMLRDKKVLAGEMRLILPLAIGKSEVRSGVSHELVLNAIADCQSA</sequence>
<name>AROB_SHIDS</name>
<gene>
    <name evidence="1" type="primary">aroB</name>
    <name type="ordered locus">SDY_3690</name>
</gene>
<feature type="chain" id="PRO_0000231126" description="3-dehydroquinate synthase">
    <location>
        <begin position="1"/>
        <end position="362"/>
    </location>
</feature>
<feature type="binding site" evidence="1">
    <location>
        <begin position="71"/>
        <end position="76"/>
    </location>
    <ligand>
        <name>NAD(+)</name>
        <dbReference type="ChEBI" id="CHEBI:57540"/>
    </ligand>
</feature>
<feature type="binding site" evidence="1">
    <location>
        <begin position="105"/>
        <end position="109"/>
    </location>
    <ligand>
        <name>NAD(+)</name>
        <dbReference type="ChEBI" id="CHEBI:57540"/>
    </ligand>
</feature>
<feature type="binding site" evidence="1">
    <location>
        <begin position="129"/>
        <end position="130"/>
    </location>
    <ligand>
        <name>NAD(+)</name>
        <dbReference type="ChEBI" id="CHEBI:57540"/>
    </ligand>
</feature>
<feature type="binding site" evidence="1">
    <location>
        <position position="142"/>
    </location>
    <ligand>
        <name>NAD(+)</name>
        <dbReference type="ChEBI" id="CHEBI:57540"/>
    </ligand>
</feature>
<feature type="binding site" evidence="1">
    <location>
        <position position="151"/>
    </location>
    <ligand>
        <name>NAD(+)</name>
        <dbReference type="ChEBI" id="CHEBI:57540"/>
    </ligand>
</feature>
<feature type="binding site" evidence="1">
    <location>
        <begin position="169"/>
        <end position="172"/>
    </location>
    <ligand>
        <name>NAD(+)</name>
        <dbReference type="ChEBI" id="CHEBI:57540"/>
    </ligand>
</feature>
<feature type="binding site" evidence="1">
    <location>
        <position position="184"/>
    </location>
    <ligand>
        <name>Zn(2+)</name>
        <dbReference type="ChEBI" id="CHEBI:29105"/>
    </ligand>
</feature>
<feature type="binding site" evidence="1">
    <location>
        <position position="247"/>
    </location>
    <ligand>
        <name>Zn(2+)</name>
        <dbReference type="ChEBI" id="CHEBI:29105"/>
    </ligand>
</feature>
<feature type="binding site" evidence="1">
    <location>
        <position position="264"/>
    </location>
    <ligand>
        <name>Zn(2+)</name>
        <dbReference type="ChEBI" id="CHEBI:29105"/>
    </ligand>
</feature>